<keyword id="KW-0012">Acyltransferase</keyword>
<keyword id="KW-0025">Alternative splicing</keyword>
<keyword id="KW-0150">Chloroplast</keyword>
<keyword id="KW-0945">Host-virus interaction</keyword>
<keyword id="KW-0471">Melatonin biosynthesis</keyword>
<keyword id="KW-0934">Plastid</keyword>
<keyword id="KW-1185">Reference proteome</keyword>
<keyword id="KW-0346">Stress response</keyword>
<keyword id="KW-0808">Transferase</keyword>
<keyword id="KW-0809">Transit peptide</keyword>
<protein>
    <recommendedName>
        <fullName evidence="27">GCN5-related N-acetyltransferase 2, chloroplastic</fullName>
        <ecNumber evidence="3 16">2.3.1.255</ecNumber>
    </recommendedName>
    <alternativeName>
        <fullName evidence="22">Acetyltransferase NSI</fullName>
        <shortName>AtNSI</shortName>
        <ecNumber evidence="3 4 6 11 16">2.3.1.48</ecNumber>
    </alternativeName>
    <alternativeName>
        <fullName evidence="22">Nuclear shuttle protein-interacting protein</fullName>
    </alternativeName>
    <alternativeName>
        <fullName evidence="26">Serotonin N-acetyl transferase 1</fullName>
        <shortName evidence="24">AtSNAT</shortName>
        <shortName evidence="25 26">AtSNAT1</shortName>
        <ecNumber evidence="12">2.3.1.87</ecNumber>
    </alternativeName>
</protein>
<comment type="function">
    <text evidence="4 6 7 9 10 11 13 14 15 16 17 18 20 21 28">Protein acetyltransferase with dual specificity triggering both N-alpha-acetylation (NTA), with a preference for alanine, serine, threonine, methionine and to a lower extent valine as substrates (can also use glycine and leucine), and epsilon-lysine acetylation (KA) of several plastid proteins (PubMed:32633465). Triggers lysine acetylation in KEA1 and KEA2 (PubMed:29967049, PubMed:31865509). Acetylates in vitro histones H2A and H3 (PubMed:12837950). Does not act as a transcriptional activator but required for the dynamic reorganization of thylakoid protein complexes and grana during photosynthetic state transitions (PubMed:16461385, PubMed:29967049, PubMed:35792507). Involved in melatonin biosynthesis by catalyzing the formation of N-acetylserotonin (NAS) from serotonin and of melatonin (N-acetyl-5-methoxytryptamine) from 5-methoxytryptamine (5-MT) (PubMed:25250906, PubMed:32354877). By triggering melatonin biosynthesis, contributes to the chloroplast protein quality control (CPQC), which plays a pivotal role in starch synthesis, and confers melatonin-associated tolerance to high light (HL) stress (PubMed:29770489, PubMed:33806011). Prevents the accumulation of oil and anthocyanin content in mature seeds and avoids seed germination in a melatonin-dependent manner, but promotes mucilage production in the seed coat (PubMed:32354877, PubMed:33811388). Contributes to melatonin-mediated anthocyanin production in cold-exposed seedlings (PubMed:27047496). Implicated in melatonin-monitored circadian dynamics of stomatal aperture to minimize night water loss and promote drought tolerance, partly by triggering hydrogen sulfide H(2)S-dependent stomotal closure in response to osmotic stress (PubMed:32064655, PubMed:33924609, PubMed:34812898).</text>
</comment>
<comment type="function">
    <text evidence="4 5 6 19">(Microbial infection) Required for begomovirus infection and systemic spread (PubMed:12837950, PubMed:15452236, PubMed:16461385). In case of begomoviruses infection, acetylates the capsid protein (CP), but not the nuclear shuttle protein (NSP) (PubMed:12837950, PubMed:15452236, PubMed:16461385). Stimulates melatonin-triggered defense responses to the necrotrophic Botrytis cinerea (PubMed:34234798).</text>
</comment>
<comment type="catalytic activity">
    <reaction evidence="7">
        <text>5-methoxytryptamine + acetyl-CoA = melatonin + CoA + H(+)</text>
        <dbReference type="Rhea" id="RHEA:66144"/>
        <dbReference type="ChEBI" id="CHEBI:15378"/>
        <dbReference type="ChEBI" id="CHEBI:16796"/>
        <dbReference type="ChEBI" id="CHEBI:57287"/>
        <dbReference type="ChEBI" id="CHEBI:57288"/>
        <dbReference type="ChEBI" id="CHEBI:166874"/>
    </reaction>
</comment>
<comment type="catalytic activity">
    <reaction evidence="4">
        <text>L-lysyl-[histone] + acetyl-CoA = N(6)-acetyl-L-lysyl-[histone] + CoA + H(+)</text>
        <dbReference type="Rhea" id="RHEA:21992"/>
        <dbReference type="Rhea" id="RHEA-COMP:9845"/>
        <dbReference type="Rhea" id="RHEA-COMP:11338"/>
        <dbReference type="ChEBI" id="CHEBI:15378"/>
        <dbReference type="ChEBI" id="CHEBI:29969"/>
        <dbReference type="ChEBI" id="CHEBI:57287"/>
        <dbReference type="ChEBI" id="CHEBI:57288"/>
        <dbReference type="ChEBI" id="CHEBI:61930"/>
        <dbReference type="EC" id="2.3.1.48"/>
    </reaction>
</comment>
<comment type="catalytic activity">
    <reaction evidence="6 11 16">
        <text>L-lysyl-[protein] + acetyl-CoA = N(6)-acetyl-L-lysyl-[protein] + CoA + H(+)</text>
        <dbReference type="Rhea" id="RHEA:45948"/>
        <dbReference type="Rhea" id="RHEA-COMP:9752"/>
        <dbReference type="Rhea" id="RHEA-COMP:10731"/>
        <dbReference type="ChEBI" id="CHEBI:15378"/>
        <dbReference type="ChEBI" id="CHEBI:29969"/>
        <dbReference type="ChEBI" id="CHEBI:57287"/>
        <dbReference type="ChEBI" id="CHEBI:57288"/>
        <dbReference type="ChEBI" id="CHEBI:61930"/>
        <dbReference type="EC" id="2.3.1.48"/>
    </reaction>
</comment>
<comment type="catalytic activity">
    <reaction evidence="7">
        <text>serotonin + acetyl-CoA = N-acetylserotonin + CoA + H(+)</text>
        <dbReference type="Rhea" id="RHEA:25217"/>
        <dbReference type="ChEBI" id="CHEBI:15378"/>
        <dbReference type="ChEBI" id="CHEBI:17697"/>
        <dbReference type="ChEBI" id="CHEBI:57287"/>
        <dbReference type="ChEBI" id="CHEBI:57288"/>
        <dbReference type="ChEBI" id="CHEBI:350546"/>
        <dbReference type="EC" id="2.3.1.87"/>
    </reaction>
</comment>
<comment type="catalytic activity">
    <reaction evidence="16">
        <text>N-terminal L-alanyl-[protein] + acetyl-CoA = N-terminal N(alpha)-acetyl-L-alanyl-[protein] + CoA + H(+)</text>
        <dbReference type="Rhea" id="RHEA:50500"/>
        <dbReference type="Rhea" id="RHEA-COMP:12701"/>
        <dbReference type="Rhea" id="RHEA-COMP:12702"/>
        <dbReference type="ChEBI" id="CHEBI:15378"/>
        <dbReference type="ChEBI" id="CHEBI:57287"/>
        <dbReference type="ChEBI" id="CHEBI:57288"/>
        <dbReference type="ChEBI" id="CHEBI:64718"/>
        <dbReference type="ChEBI" id="CHEBI:83683"/>
        <dbReference type="EC" id="2.3.1.255"/>
    </reaction>
</comment>
<comment type="catalytic activity">
    <reaction evidence="16">
        <text>N-terminal L-seryl-[protein] + acetyl-CoA = N-terminal N(alpha)-acetyl-L-seryl-[protein] + CoA + H(+)</text>
        <dbReference type="Rhea" id="RHEA:50504"/>
        <dbReference type="Rhea" id="RHEA-COMP:12703"/>
        <dbReference type="Rhea" id="RHEA-COMP:12704"/>
        <dbReference type="ChEBI" id="CHEBI:15378"/>
        <dbReference type="ChEBI" id="CHEBI:57287"/>
        <dbReference type="ChEBI" id="CHEBI:57288"/>
        <dbReference type="ChEBI" id="CHEBI:64738"/>
        <dbReference type="ChEBI" id="CHEBI:83690"/>
        <dbReference type="EC" id="2.3.1.255"/>
    </reaction>
</comment>
<comment type="catalytic activity">
    <reaction evidence="16">
        <text>N-terminal L-valyl-[protein] + acetyl-CoA = N-terminal N(alpha)-acetyl-L-valyl-[protein] + CoA + H(+)</text>
        <dbReference type="Rhea" id="RHEA:50508"/>
        <dbReference type="Rhea" id="RHEA-COMP:12705"/>
        <dbReference type="Rhea" id="RHEA-COMP:12706"/>
        <dbReference type="ChEBI" id="CHEBI:15378"/>
        <dbReference type="ChEBI" id="CHEBI:57287"/>
        <dbReference type="ChEBI" id="CHEBI:57288"/>
        <dbReference type="ChEBI" id="CHEBI:64741"/>
        <dbReference type="ChEBI" id="CHEBI:133371"/>
        <dbReference type="EC" id="2.3.1.255"/>
    </reaction>
</comment>
<comment type="catalytic activity">
    <reaction evidence="16">
        <text>N-terminal glycyl-[protein] + acetyl-CoA = N-terminal N(alpha)-acetylglycyl-[protein] + CoA + H(+)</text>
        <dbReference type="Rhea" id="RHEA:50496"/>
        <dbReference type="Rhea" id="RHEA-COMP:12666"/>
        <dbReference type="Rhea" id="RHEA-COMP:12700"/>
        <dbReference type="ChEBI" id="CHEBI:15378"/>
        <dbReference type="ChEBI" id="CHEBI:57287"/>
        <dbReference type="ChEBI" id="CHEBI:57288"/>
        <dbReference type="ChEBI" id="CHEBI:64723"/>
        <dbReference type="ChEBI" id="CHEBI:133369"/>
        <dbReference type="EC" id="2.3.1.255"/>
    </reaction>
</comment>
<comment type="catalytic activity">
    <reaction evidence="16">
        <text>an N-terminal L-alpha-aminoacyl-[protein] + acetyl-CoA = N-terminal N(alpha)-acetyl-L-alpha-aminoacyl-[protein] + CoA + H(+)</text>
        <dbReference type="Rhea" id="RHEA:21028"/>
        <dbReference type="Rhea" id="RHEA-COMP:10636"/>
        <dbReference type="Rhea" id="RHEA-COMP:15589"/>
        <dbReference type="ChEBI" id="CHEBI:15378"/>
        <dbReference type="ChEBI" id="CHEBI:57287"/>
        <dbReference type="ChEBI" id="CHEBI:57288"/>
        <dbReference type="ChEBI" id="CHEBI:78597"/>
        <dbReference type="ChEBI" id="CHEBI:78598"/>
    </reaction>
</comment>
<comment type="catalytic activity">
    <reaction evidence="16">
        <text>N-terminal L-threonyl-[protein] + acetyl-CoA = N-terminal N(alpha)-acetyl-L-threonyl-[protein] + CoA + H(+)</text>
        <dbReference type="Rhea" id="RHEA:50516"/>
        <dbReference type="Rhea" id="RHEA-COMP:12709"/>
        <dbReference type="Rhea" id="RHEA-COMP:12710"/>
        <dbReference type="ChEBI" id="CHEBI:15378"/>
        <dbReference type="ChEBI" id="CHEBI:57287"/>
        <dbReference type="ChEBI" id="CHEBI:57288"/>
        <dbReference type="ChEBI" id="CHEBI:64739"/>
        <dbReference type="ChEBI" id="CHEBI:133375"/>
        <dbReference type="EC" id="2.3.1.255"/>
    </reaction>
</comment>
<comment type="catalytic activity">
    <reaction evidence="16">
        <text>N-terminal L-methionyl-[protein] + acetyl-CoA = N-terminal N(alpha)-acetyl-L-methionyl-[protein] + CoA + H(+)</text>
        <dbReference type="Rhea" id="RHEA:75239"/>
        <dbReference type="Rhea" id="RHEA-COMP:18493"/>
        <dbReference type="Rhea" id="RHEA-COMP:18494"/>
        <dbReference type="ChEBI" id="CHEBI:15378"/>
        <dbReference type="ChEBI" id="CHEBI:57287"/>
        <dbReference type="ChEBI" id="CHEBI:57288"/>
        <dbReference type="ChEBI" id="CHEBI:64731"/>
        <dbReference type="ChEBI" id="CHEBI:133414"/>
    </reaction>
</comment>
<comment type="catalytic activity">
    <reaction evidence="16">
        <text>N-terminal L-leucyl-[protein] + acetyl-CoA = N-terminal N(alpha)-acetyl-L-leucyl-[protein] + CoA + H(+)</text>
        <dbReference type="Rhea" id="RHEA:75243"/>
        <dbReference type="Rhea" id="RHEA-COMP:18497"/>
        <dbReference type="Rhea" id="RHEA-COMP:18498"/>
        <dbReference type="ChEBI" id="CHEBI:15378"/>
        <dbReference type="ChEBI" id="CHEBI:57287"/>
        <dbReference type="ChEBI" id="CHEBI:57288"/>
        <dbReference type="ChEBI" id="CHEBI:194222"/>
        <dbReference type="ChEBI" id="CHEBI:194223"/>
    </reaction>
</comment>
<comment type="activity regulation">
    <text evidence="6">Inhibited by the viral nuclear shuttle protein (NSP) that binds to the region required for oligomerization.</text>
</comment>
<comment type="biophysicochemical properties">
    <kinetics>
        <KM evidence="7">309 uM for serotonin</KM>
        <KM evidence="7">51 uM for 5-methoxytryptamine</KM>
        <KM evidence="6">0.39 uM for acetate</KM>
        <Vmax evidence="7">1.4 nmol/min/mg enzyme with serotonin as substrate</Vmax>
        <Vmax evidence="7">5.3 nmol/min/mg enzyme with 5-methoxytryptamine as substrate</Vmax>
        <Vmax evidence="6">15.1 pmol/min/nmol enzyme</Vmax>
    </kinetics>
    <temperatureDependence>
        <text evidence="7">Optimum temperature is 45 degrees Celsius.</text>
    </temperatureDependence>
</comment>
<comment type="subunit">
    <text evidence="4 5">Oligomer. Interacts with begomoviruses NSP but not with CP. This interaction may allow NSP to recruit NSI monomers to acetylate viral genome-bound CP and thus regulate nuclear export of viral genome by NSP.</text>
</comment>
<comment type="subcellular location">
    <subcellularLocation>
        <location evidence="7 11 15 16">Plastid</location>
        <location evidence="7 11 15 16">Chloroplast</location>
    </subcellularLocation>
</comment>
<comment type="alternative products">
    <event type="alternative splicing"/>
    <isoform>
        <id>Q7X9V3-1</id>
        <name>1</name>
        <sequence type="displayed"/>
    </isoform>
    <isoform>
        <id>Q7X9V3-2</id>
        <name>2</name>
        <sequence type="described" ref="VSP_033513"/>
    </isoform>
    <isoform>
        <id>Q7X9V3-3</id>
        <name>3</name>
        <sequence type="described" ref="VSP_033514"/>
    </isoform>
</comment>
<comment type="tissue specificity">
    <text evidence="4 6 12 15 16">Highly expressed in cauline leaves and seeds, at lower levels in stems, siliques, inflorescences and rosettes leaves and at very low levels in roots (PubMed:12837950, PubMed:16461385, PubMed:31698875, PubMed:32354877, PubMed:32633465). Expressed in the xylem parenchyma and phloem of the leaves and root, and in guard cells of young leaves (PubMed:12837950, PubMed:16461385, PubMed:32633465).</text>
</comment>
<comment type="developmental stage">
    <text evidence="6 15">Expressed in the apical meristem, root vasculature and all veins in the cotyledons of young developing seedlings (PubMed:16461385). Loss of expression in the older maturing tissues (PubMed:16461385). Accumulates transiently in developing seeds (e.g. including embryos and seed coat), reaching a peak ten days after pollination (10 DAP) (PubMed:32354877).</text>
</comment>
<comment type="induction">
    <text evidence="8 10 14 18 20">Expressed following a circadian rhythm with the highest level 4 hours into the light and the lowest level at the end of the night (PubMed:26828406, PubMed:32064655). Induced by osmotic stress (e.g. PEG), especially in the presence of hydrogen sulfide H(2)S (PubMed:33924609, PubMed:34812898). Accumulates in response to high light (HL) (PubMed:29770489).</text>
</comment>
<comment type="PTM">
    <text evidence="20">S-sulfhydrated and activated by hydrogen sulfide H(2)S to promote melatonin accumulation and subsequent melatonin-dependent stomotal closure to combat osmotic stress.</text>
</comment>
<comment type="PTM">
    <text evidence="16">Autoacetylated.</text>
</comment>
<comment type="disruption phenotype">
    <text evidence="9 10 11 13 14 15 16 17 18 19 20 21 28">Dwarf plants, reduced starch accumulation, lower Lhcb1, Lhcb4, and RBCL protein levels (but normal corresponding transcripts expression), and delayed flowering, particularly in low fluence light conditions (PubMed:33806011). Suppressed expression of caseinolytic protease (Clp) and chloroplast heat shock proteins (CpHSPs), essential components of the chloroplast protein quality control (CPQC) (PubMed:33806011). Increased oil and anthocyanin content in mature seeds, but less mucilage accumulation in the seed coat (PubMed:32354877). Lower anthocyanin levels in cold-exposed seedlings (PubMed:27047496). Impaired N-alpha-acetylation (NTA) and epsilon-lysine acetylation (KA) activities toward several plastid proteins (PubMed:32633465). High susceptibility to high light (HL) stress as a result of devoid melatonin induction (PubMed:29770489). Decreased Lys acetylation status of specific photosynthetic proteins including PSI, PSII and LHCII subunits asssociated with their abnormal localization within the thylakoid network; LHCII antenna remaining largely in grana stacks and phosphorylated Lhcb2 associating to LHCII trimer pools (PubMed:29967049, PubMed:35792507). Absence of acetylated KEA1 and KEA2 proteins (PubMed:29967049, PubMed:31865509). Defective in state transitions of photosynthetic reaction centers photosystem II (PSII) and photosystem I (PSI) leading to an impaired accumulation of the PSI-LHCII state transition complex (PubMed:29967049, PubMed:35792507). Increased sensitivity to osmotic stress due to an altered osmotic stress-induced melatonin accumulation (PubMed:33924609). Altered circadian dynamics of stomatal aperture (PubMed:32064655). Reduced stomatal closure in response to hydrogen sulfide H(2)S and PEG (PubMed:34812898). Promoted seed germination (PubMed:33811388). Increased susceptibility to Botrytis cinerea (PubMed:34234798).</text>
</comment>
<comment type="miscellaneous">
    <text>Lacks the bromodomain involved in binding of other acetyltransferases to histones.</text>
</comment>
<comment type="similarity">
    <text evidence="32">Belongs to the acetyltransferase family. GNAT subfamily.</text>
</comment>
<comment type="caution">
    <text evidence="4">Was initially described as nuclear.</text>
</comment>
<comment type="sequence caution" evidence="32">
    <conflict type="erroneous gene model prediction">
        <sequence resource="EMBL-CDS" id="AAG50796"/>
    </conflict>
</comment>
<gene>
    <name evidence="22" type="primary">NSI</name>
    <name evidence="27" type="synonym">GNAT2</name>
    <name evidence="24 29" type="synonym">SNAT</name>
    <name evidence="25 26" type="synonym">SNAT1</name>
    <name evidence="33" type="ordered locus">At1g32070</name>
    <name evidence="34" type="ORF">T12O21.3</name>
</gene>
<organism>
    <name type="scientific">Arabidopsis thaliana</name>
    <name type="common">Mouse-ear cress</name>
    <dbReference type="NCBI Taxonomy" id="3702"/>
    <lineage>
        <taxon>Eukaryota</taxon>
        <taxon>Viridiplantae</taxon>
        <taxon>Streptophyta</taxon>
        <taxon>Embryophyta</taxon>
        <taxon>Tracheophyta</taxon>
        <taxon>Spermatophyta</taxon>
        <taxon>Magnoliopsida</taxon>
        <taxon>eudicotyledons</taxon>
        <taxon>Gunneridae</taxon>
        <taxon>Pentapetalae</taxon>
        <taxon>rosids</taxon>
        <taxon>malvids</taxon>
        <taxon>Brassicales</taxon>
        <taxon>Brassicaceae</taxon>
        <taxon>Camelineae</taxon>
        <taxon>Arabidopsis</taxon>
    </lineage>
</organism>
<name>GNAT2_ARATH</name>
<dbReference type="EC" id="2.3.1.255" evidence="3 16"/>
<dbReference type="EC" id="2.3.1.48" evidence="3 4 6 11 16"/>
<dbReference type="EC" id="2.3.1.87" evidence="12"/>
<dbReference type="EMBL" id="AY281105">
    <property type="protein sequence ID" value="AAP22085.1"/>
    <property type="molecule type" value="mRNA"/>
</dbReference>
<dbReference type="EMBL" id="AC074309">
    <property type="protein sequence ID" value="AAG50796.1"/>
    <property type="status" value="ALT_SEQ"/>
    <property type="molecule type" value="Genomic_DNA"/>
</dbReference>
<dbReference type="EMBL" id="CP002684">
    <property type="protein sequence ID" value="AEE31431.1"/>
    <property type="molecule type" value="Genomic_DNA"/>
</dbReference>
<dbReference type="EMBL" id="CP002684">
    <property type="protein sequence ID" value="AEE31432.1"/>
    <property type="molecule type" value="Genomic_DNA"/>
</dbReference>
<dbReference type="EMBL" id="CP002684">
    <property type="protein sequence ID" value="AEE31433.1"/>
    <property type="molecule type" value="Genomic_DNA"/>
</dbReference>
<dbReference type="EMBL" id="AY086183">
    <property type="protein sequence ID" value="AAM64262.1"/>
    <property type="molecule type" value="mRNA"/>
</dbReference>
<dbReference type="EMBL" id="BT024481">
    <property type="protein sequence ID" value="ABD19662.1"/>
    <property type="molecule type" value="mRNA"/>
</dbReference>
<dbReference type="EMBL" id="BX818104">
    <property type="status" value="NOT_ANNOTATED_CDS"/>
    <property type="molecule type" value="mRNA"/>
</dbReference>
<dbReference type="PIR" id="A86445">
    <property type="entry name" value="A86445"/>
</dbReference>
<dbReference type="RefSeq" id="NP_001077641.1">
    <molecule id="Q7X9V3-3"/>
    <property type="nucleotide sequence ID" value="NM_001084172.1"/>
</dbReference>
<dbReference type="RefSeq" id="NP_564387.1">
    <molecule id="Q7X9V3-2"/>
    <property type="nucleotide sequence ID" value="NM_102941.3"/>
</dbReference>
<dbReference type="RefSeq" id="NP_973950.1">
    <molecule id="Q7X9V3-1"/>
    <property type="nucleotide sequence ID" value="NM_202221.2"/>
</dbReference>
<dbReference type="SMR" id="Q7X9V3"/>
<dbReference type="BioGRID" id="25333">
    <property type="interactions" value="5"/>
</dbReference>
<dbReference type="FunCoup" id="Q7X9V3">
    <property type="interactions" value="1120"/>
</dbReference>
<dbReference type="IntAct" id="Q7X9V3">
    <property type="interactions" value="5"/>
</dbReference>
<dbReference type="STRING" id="3702.Q7X9V3"/>
<dbReference type="iPTMnet" id="Q7X9V3"/>
<dbReference type="PaxDb" id="3702-AT1G32070.2"/>
<dbReference type="ProteomicsDB" id="250484">
    <molecule id="Q7X9V3-1"/>
</dbReference>
<dbReference type="EnsemblPlants" id="AT1G32070.1">
    <molecule id="Q7X9V3-2"/>
    <property type="protein sequence ID" value="AT1G32070.1"/>
    <property type="gene ID" value="AT1G32070"/>
</dbReference>
<dbReference type="EnsemblPlants" id="AT1G32070.2">
    <molecule id="Q7X9V3-1"/>
    <property type="protein sequence ID" value="AT1G32070.2"/>
    <property type="gene ID" value="AT1G32070"/>
</dbReference>
<dbReference type="EnsemblPlants" id="AT1G32070.3">
    <molecule id="Q7X9V3-3"/>
    <property type="protein sequence ID" value="AT1G32070.3"/>
    <property type="gene ID" value="AT1G32070"/>
</dbReference>
<dbReference type="GeneID" id="840099"/>
<dbReference type="Gramene" id="AT1G32070.1">
    <molecule id="Q7X9V3-2"/>
    <property type="protein sequence ID" value="AT1G32070.1"/>
    <property type="gene ID" value="AT1G32070"/>
</dbReference>
<dbReference type="Gramene" id="AT1G32070.2">
    <molecule id="Q7X9V3-1"/>
    <property type="protein sequence ID" value="AT1G32070.2"/>
    <property type="gene ID" value="AT1G32070"/>
</dbReference>
<dbReference type="Gramene" id="AT1G32070.3">
    <molecule id="Q7X9V3-3"/>
    <property type="protein sequence ID" value="AT1G32070.3"/>
    <property type="gene ID" value="AT1G32070"/>
</dbReference>
<dbReference type="KEGG" id="ath:AT1G32070"/>
<dbReference type="Araport" id="AT1G32070"/>
<dbReference type="TAIR" id="AT1G32070">
    <property type="gene designation" value="NSI"/>
</dbReference>
<dbReference type="eggNOG" id="ENOG502QSCQ">
    <property type="taxonomic scope" value="Eukaryota"/>
</dbReference>
<dbReference type="InParanoid" id="Q7X9V3"/>
<dbReference type="OMA" id="QALCDKT"/>
<dbReference type="OrthoDB" id="10039976at2759"/>
<dbReference type="PhylomeDB" id="Q7X9V3"/>
<dbReference type="PRO" id="PR:Q7X9V3"/>
<dbReference type="Proteomes" id="UP000006548">
    <property type="component" value="Chromosome 1"/>
</dbReference>
<dbReference type="ExpressionAtlas" id="Q7X9V3">
    <property type="expression patterns" value="baseline and differential"/>
</dbReference>
<dbReference type="GO" id="GO:0009507">
    <property type="term" value="C:chloroplast"/>
    <property type="evidence" value="ECO:0000314"/>
    <property type="project" value="UniProtKB"/>
</dbReference>
<dbReference type="GO" id="GO:0005634">
    <property type="term" value="C:nucleus"/>
    <property type="evidence" value="ECO:0000314"/>
    <property type="project" value="TAIR"/>
</dbReference>
<dbReference type="GO" id="GO:0004059">
    <property type="term" value="F:aralkylamine N-acetyltransferase activity"/>
    <property type="evidence" value="ECO:0000314"/>
    <property type="project" value="TAIR"/>
</dbReference>
<dbReference type="GO" id="GO:0004402">
    <property type="term" value="F:histone acetyltransferase activity"/>
    <property type="evidence" value="ECO:0007669"/>
    <property type="project" value="RHEA"/>
</dbReference>
<dbReference type="GO" id="GO:0004468">
    <property type="term" value="F:L-lysine N-acetyltransferase activity, acting on acetyl phosphate as donor"/>
    <property type="evidence" value="ECO:0000314"/>
    <property type="project" value="TAIR"/>
</dbReference>
<dbReference type="GO" id="GO:0008080">
    <property type="term" value="F:N-acetyltransferase activity"/>
    <property type="evidence" value="ECO:0000314"/>
    <property type="project" value="UniProtKB"/>
</dbReference>
<dbReference type="GO" id="GO:0120518">
    <property type="term" value="F:protein N-terminal-methionine acetyltransferase activity"/>
    <property type="evidence" value="ECO:0007669"/>
    <property type="project" value="RHEA"/>
</dbReference>
<dbReference type="GO" id="GO:1990189">
    <property type="term" value="F:protein N-terminal-serine acetyltransferase activity"/>
    <property type="evidence" value="ECO:0007669"/>
    <property type="project" value="RHEA"/>
</dbReference>
<dbReference type="GO" id="GO:0008999">
    <property type="term" value="F:protein-N-terminal-alanine acetyltransferase activity"/>
    <property type="evidence" value="ECO:0007669"/>
    <property type="project" value="RHEA"/>
</dbReference>
<dbReference type="GO" id="GO:0007623">
    <property type="term" value="P:circadian rhythm"/>
    <property type="evidence" value="ECO:0000270"/>
    <property type="project" value="UniProtKB"/>
</dbReference>
<dbReference type="GO" id="GO:0050832">
    <property type="term" value="P:defense response to fungus"/>
    <property type="evidence" value="ECO:0000315"/>
    <property type="project" value="UniProtKB"/>
</dbReference>
<dbReference type="GO" id="GO:0030187">
    <property type="term" value="P:melatonin biosynthetic process"/>
    <property type="evidence" value="ECO:0000314"/>
    <property type="project" value="TAIR"/>
</dbReference>
<dbReference type="GO" id="GO:0048354">
    <property type="term" value="P:mucilage biosynthetic process involved in seed coat development"/>
    <property type="evidence" value="ECO:0000315"/>
    <property type="project" value="UniProtKB"/>
</dbReference>
<dbReference type="GO" id="GO:0006474">
    <property type="term" value="P:N-terminal protein amino acid acetylation"/>
    <property type="evidence" value="ECO:0000314"/>
    <property type="project" value="UniProtKB"/>
</dbReference>
<dbReference type="GO" id="GO:0010187">
    <property type="term" value="P:negative regulation of seed germination"/>
    <property type="evidence" value="ECO:0000315"/>
    <property type="project" value="UniProtKB"/>
</dbReference>
<dbReference type="GO" id="GO:0018394">
    <property type="term" value="P:peptidyl-lysine acetylation"/>
    <property type="evidence" value="ECO:0000314"/>
    <property type="project" value="UniProtKB"/>
</dbReference>
<dbReference type="GO" id="GO:0062055">
    <property type="term" value="P:photosynthetic state transition"/>
    <property type="evidence" value="ECO:0000314"/>
    <property type="project" value="TAIR"/>
</dbReference>
<dbReference type="GO" id="GO:0006515">
    <property type="term" value="P:protein quality control for misfolded or incompletely synthesized proteins"/>
    <property type="evidence" value="ECO:0000315"/>
    <property type="project" value="UniProtKB"/>
</dbReference>
<dbReference type="GO" id="GO:0031537">
    <property type="term" value="P:regulation of anthocyanin metabolic process"/>
    <property type="evidence" value="ECO:0000315"/>
    <property type="project" value="UniProtKB"/>
</dbReference>
<dbReference type="GO" id="GO:2000028">
    <property type="term" value="P:regulation of photoperiodism, flowering"/>
    <property type="evidence" value="ECO:0000315"/>
    <property type="project" value="UniProtKB"/>
</dbReference>
<dbReference type="GO" id="GO:2000904">
    <property type="term" value="P:regulation of starch metabolic process"/>
    <property type="evidence" value="ECO:0000315"/>
    <property type="project" value="UniProtKB"/>
</dbReference>
<dbReference type="GO" id="GO:0090333">
    <property type="term" value="P:regulation of stomatal closure"/>
    <property type="evidence" value="ECO:0000315"/>
    <property type="project" value="UniProtKB"/>
</dbReference>
<dbReference type="GO" id="GO:0009409">
    <property type="term" value="P:response to cold"/>
    <property type="evidence" value="ECO:0000315"/>
    <property type="project" value="UniProtKB"/>
</dbReference>
<dbReference type="GO" id="GO:0009644">
    <property type="term" value="P:response to high light intensity"/>
    <property type="evidence" value="ECO:0000315"/>
    <property type="project" value="UniProtKB"/>
</dbReference>
<dbReference type="GO" id="GO:1904880">
    <property type="term" value="P:response to hydrogen sulfide"/>
    <property type="evidence" value="ECO:0000315"/>
    <property type="project" value="UniProtKB"/>
</dbReference>
<dbReference type="GO" id="GO:0010555">
    <property type="term" value="P:response to mannitol"/>
    <property type="evidence" value="ECO:0000270"/>
    <property type="project" value="UniProtKB"/>
</dbReference>
<dbReference type="GO" id="GO:0006970">
    <property type="term" value="P:response to osmotic stress"/>
    <property type="evidence" value="ECO:0000315"/>
    <property type="project" value="UniProtKB"/>
</dbReference>
<dbReference type="GO" id="GO:0010344">
    <property type="term" value="P:seed oilbody biogenesis"/>
    <property type="evidence" value="ECO:0000315"/>
    <property type="project" value="UniProtKB"/>
</dbReference>
<dbReference type="GO" id="GO:0042428">
    <property type="term" value="P:serotonin metabolic process"/>
    <property type="evidence" value="ECO:0000314"/>
    <property type="project" value="UniProtKB"/>
</dbReference>
<dbReference type="GO" id="GO:0010027">
    <property type="term" value="P:thylakoid membrane organization"/>
    <property type="evidence" value="ECO:0000315"/>
    <property type="project" value="UniProtKB"/>
</dbReference>
<dbReference type="GO" id="GO:0046739">
    <property type="term" value="P:transport of virus in multicellular host"/>
    <property type="evidence" value="ECO:0000315"/>
    <property type="project" value="TAIR"/>
</dbReference>
<dbReference type="CDD" id="cd04301">
    <property type="entry name" value="NAT_SF"/>
    <property type="match status" value="1"/>
</dbReference>
<dbReference type="FunFam" id="3.40.630.30:FF:000059">
    <property type="entry name" value="Putative acetyltransferase NSI"/>
    <property type="match status" value="1"/>
</dbReference>
<dbReference type="Gene3D" id="3.40.630.30">
    <property type="match status" value="1"/>
</dbReference>
<dbReference type="InterPro" id="IPR016181">
    <property type="entry name" value="Acyl_CoA_acyltransferase"/>
</dbReference>
<dbReference type="InterPro" id="IPR000182">
    <property type="entry name" value="GNAT_dom"/>
</dbReference>
<dbReference type="InterPro" id="IPR045039">
    <property type="entry name" value="NSI-like"/>
</dbReference>
<dbReference type="PANTHER" id="PTHR43626">
    <property type="entry name" value="ACYL-COA N-ACYLTRANSFERASE"/>
    <property type="match status" value="1"/>
</dbReference>
<dbReference type="PANTHER" id="PTHR43626:SF4">
    <property type="entry name" value="GCN5-RELATED N-ACETYLTRANSFERASE 2, CHLOROPLASTIC"/>
    <property type="match status" value="1"/>
</dbReference>
<dbReference type="Pfam" id="PF00583">
    <property type="entry name" value="Acetyltransf_1"/>
    <property type="match status" value="1"/>
</dbReference>
<dbReference type="SUPFAM" id="SSF55729">
    <property type="entry name" value="Acyl-CoA N-acyltransferases (Nat)"/>
    <property type="match status" value="1"/>
</dbReference>
<dbReference type="PROSITE" id="PS51186">
    <property type="entry name" value="GNAT"/>
    <property type="match status" value="1"/>
</dbReference>
<sequence length="258" mass="28649">MLLIPISSSSSSSISPPPNSYPSNHHSLFFSNLTFPIQHGSRKLKTLRLRANFWESIRSGFVKNNNSTQLVEPPSIVNDEEEETEPLLPVEFTLVERNLEDGLVEEIIFSSGGEIDVYDLQGLCDKVGWPRRPLVKLAAALKNSYMVATLHSVMKSSSDSDSSEGGDGEKQQEKKLIGMARATSDHAFNATIWDVLVDPEYQGQGLGKALVEKLVRALLQRDIGNISLFADSQVVDFYQNLGFEADPEGIKGMFWYPK</sequence>
<reference key="1">
    <citation type="journal article" date="2003" name="Plant Cell">
        <title>A novel Arabidopsis acetyltransferase interacts with the geminivirus movement protein NSP.</title>
        <authorList>
            <person name="McGarry R.C."/>
            <person name="Barron Y.D."/>
            <person name="Carvalho M.F."/>
            <person name="Hill J.E."/>
            <person name="Gold D."/>
            <person name="Cheung E."/>
            <person name="Kraus W.L."/>
            <person name="Lazarowitz S.G."/>
        </authorList>
    </citation>
    <scope>NUCLEOTIDE SEQUENCE [MRNA] (ISOFORM 1)</scope>
    <scope>FUNCTION (MICROBIAL INFECTION)</scope>
    <scope>CATALYTIC ACTIVITY</scope>
    <scope>TISSUE SPECIFICITY</scope>
    <scope>CAUTION ON SUBCELLULAR LOCATION</scope>
    <scope>ACETYLATION</scope>
    <scope>INTERACTION WITH CABBAGE LEAF CURL VIRUS NSP</scope>
</reference>
<reference key="2">
    <citation type="journal article" date="2000" name="Nature">
        <title>Sequence and analysis of chromosome 1 of the plant Arabidopsis thaliana.</title>
        <authorList>
            <person name="Theologis A."/>
            <person name="Ecker J.R."/>
            <person name="Palm C.J."/>
            <person name="Federspiel N.A."/>
            <person name="Kaul S."/>
            <person name="White O."/>
            <person name="Alonso J."/>
            <person name="Altafi H."/>
            <person name="Araujo R."/>
            <person name="Bowman C.L."/>
            <person name="Brooks S.Y."/>
            <person name="Buehler E."/>
            <person name="Chan A."/>
            <person name="Chao Q."/>
            <person name="Chen H."/>
            <person name="Cheuk R.F."/>
            <person name="Chin C.W."/>
            <person name="Chung M.K."/>
            <person name="Conn L."/>
            <person name="Conway A.B."/>
            <person name="Conway A.R."/>
            <person name="Creasy T.H."/>
            <person name="Dewar K."/>
            <person name="Dunn P."/>
            <person name="Etgu P."/>
            <person name="Feldblyum T.V."/>
            <person name="Feng J.-D."/>
            <person name="Fong B."/>
            <person name="Fujii C.Y."/>
            <person name="Gill J.E."/>
            <person name="Goldsmith A.D."/>
            <person name="Haas B."/>
            <person name="Hansen N.F."/>
            <person name="Hughes B."/>
            <person name="Huizar L."/>
            <person name="Hunter J.L."/>
            <person name="Jenkins J."/>
            <person name="Johnson-Hopson C."/>
            <person name="Khan S."/>
            <person name="Khaykin E."/>
            <person name="Kim C.J."/>
            <person name="Koo H.L."/>
            <person name="Kremenetskaia I."/>
            <person name="Kurtz D.B."/>
            <person name="Kwan A."/>
            <person name="Lam B."/>
            <person name="Langin-Hooper S."/>
            <person name="Lee A."/>
            <person name="Lee J.M."/>
            <person name="Lenz C.A."/>
            <person name="Li J.H."/>
            <person name="Li Y.-P."/>
            <person name="Lin X."/>
            <person name="Liu S.X."/>
            <person name="Liu Z.A."/>
            <person name="Luros J.S."/>
            <person name="Maiti R."/>
            <person name="Marziali A."/>
            <person name="Militscher J."/>
            <person name="Miranda M."/>
            <person name="Nguyen M."/>
            <person name="Nierman W.C."/>
            <person name="Osborne B.I."/>
            <person name="Pai G."/>
            <person name="Peterson J."/>
            <person name="Pham P.K."/>
            <person name="Rizzo M."/>
            <person name="Rooney T."/>
            <person name="Rowley D."/>
            <person name="Sakano H."/>
            <person name="Salzberg S.L."/>
            <person name="Schwartz J.R."/>
            <person name="Shinn P."/>
            <person name="Southwick A.M."/>
            <person name="Sun H."/>
            <person name="Tallon L.J."/>
            <person name="Tambunga G."/>
            <person name="Toriumi M.J."/>
            <person name="Town C.D."/>
            <person name="Utterback T."/>
            <person name="Van Aken S."/>
            <person name="Vaysberg M."/>
            <person name="Vysotskaia V.S."/>
            <person name="Walker M."/>
            <person name="Wu D."/>
            <person name="Yu G."/>
            <person name="Fraser C.M."/>
            <person name="Venter J.C."/>
            <person name="Davis R.W."/>
        </authorList>
    </citation>
    <scope>NUCLEOTIDE SEQUENCE [LARGE SCALE GENOMIC DNA]</scope>
    <source>
        <strain>cv. Columbia</strain>
    </source>
</reference>
<reference key="3">
    <citation type="journal article" date="2017" name="Plant J.">
        <title>Araport11: a complete reannotation of the Arabidopsis thaliana reference genome.</title>
        <authorList>
            <person name="Cheng C.Y."/>
            <person name="Krishnakumar V."/>
            <person name="Chan A.P."/>
            <person name="Thibaud-Nissen F."/>
            <person name="Schobel S."/>
            <person name="Town C.D."/>
        </authorList>
    </citation>
    <scope>GENOME REANNOTATION</scope>
    <source>
        <strain>cv. Columbia</strain>
    </source>
</reference>
<reference key="4">
    <citation type="submission" date="2002-03" db="EMBL/GenBank/DDBJ databases">
        <title>Full-length cDNA from Arabidopsis thaliana.</title>
        <authorList>
            <person name="Brover V.V."/>
            <person name="Troukhan M.E."/>
            <person name="Alexandrov N.A."/>
            <person name="Lu Y.-P."/>
            <person name="Flavell R.B."/>
            <person name="Feldmann K.A."/>
        </authorList>
    </citation>
    <scope>NUCLEOTIDE SEQUENCE [LARGE SCALE MRNA] (ISOFORM 2)</scope>
</reference>
<reference key="5">
    <citation type="submission" date="2006-02" db="EMBL/GenBank/DDBJ databases">
        <title>Arabidopsis ORF clones.</title>
        <authorList>
            <person name="Shinn P."/>
            <person name="Chen H."/>
            <person name="Kim C.J."/>
            <person name="Ecker J.R."/>
        </authorList>
    </citation>
    <scope>NUCLEOTIDE SEQUENCE [LARGE SCALE MRNA] (ISOFORM 2)</scope>
    <source>
        <strain>cv. Columbia</strain>
    </source>
</reference>
<reference key="6">
    <citation type="journal article" date="2004" name="Genome Res.">
        <title>Whole genome sequence comparisons and 'full-length' cDNA sequences: a combined approach to evaluate and improve Arabidopsis genome annotation.</title>
        <authorList>
            <person name="Castelli V."/>
            <person name="Aury J.-M."/>
            <person name="Jaillon O."/>
            <person name="Wincker P."/>
            <person name="Clepet C."/>
            <person name="Menard M."/>
            <person name="Cruaud C."/>
            <person name="Quetier F."/>
            <person name="Scarpelli C."/>
            <person name="Schaechter V."/>
            <person name="Temple G."/>
            <person name="Caboche M."/>
            <person name="Weissenbach J."/>
            <person name="Salanoubat M."/>
        </authorList>
    </citation>
    <scope>NUCLEOTIDE SEQUENCE [LARGE SCALE MRNA] OF 2-258 (ISOFORM 3)</scope>
    <source>
        <strain>cv. Columbia</strain>
    </source>
</reference>
<reference key="7">
    <citation type="journal article" date="2004" name="J. Virol.">
        <title>Interaction of the movement protein NSP and the Arabidopsis acetyltransferase AtNSI is necessary for Cabbage leaf curl geminivirus infection and pathogenicity.</title>
        <authorList>
            <person name="Carvalho M.F."/>
            <person name="Lazarowitz S.G."/>
        </authorList>
    </citation>
    <scope>FUNCTION (MICROBIAL INFECTION)</scope>
    <scope>INTERACTION WITH BEGOMOVIRUSES NSP</scope>
</reference>
<reference key="8">
    <citation type="journal article" date="2006" name="Plant Physiol.">
        <title>The geminivirus nuclear shuttle protein NSP inhibits the activity of AtNSI, a vascular-expressed Arabidopsis acetyltransferase regulated with the sink-to-source transition.</title>
        <authorList>
            <person name="Carvalho M.F."/>
            <person name="Turgeon R."/>
            <person name="Lazarowitz S.G."/>
        </authorList>
    </citation>
    <scope>FUNCTION (MICROBIAL INFECTION)</scope>
    <scope>MUTAGENESIS OF ILE-107; LYS-136 AND ASP-194</scope>
    <scope>DEVELOPMENTAL STAGE</scope>
    <scope>TISSUE SPECIFICITY</scope>
    <scope>ACTIVITY REGULATION</scope>
    <scope>BIOPHYSICOCHEMICAL PROPERTIES</scope>
    <scope>CATALYTIC ACTIVITY</scope>
</reference>
<reference key="9">
    <citation type="journal article" date="2014" name="J. Pineal Res.">
        <title>Cloning of Arabidopsis serotonin N-acetyltransferase and its role with caffeic acid O-methyltransferase in the biosynthesis of melatonin in vitro despite their different subcellular localizations.</title>
        <authorList>
            <person name="Lee H.Y."/>
            <person name="Byeon Y."/>
            <person name="Lee K."/>
            <person name="Lee H.-J."/>
            <person name="Back K."/>
        </authorList>
    </citation>
    <scope>FUNCTION</scope>
    <scope>CATALYTIC ACTIVITY</scope>
    <scope>BIOPHYSICOCHEMICAL PROPERTIES</scope>
    <scope>SUBCELLULAR LOCATION</scope>
</reference>
<reference key="10">
    <citation type="journal article" date="2016" name="Front. Plant Sci.">
        <title>Melatonin improved anthocyanin accumulation by regulating gene expressions and resulted in high reactive oxygen species scavenging capacity in cabbage.</title>
        <authorList>
            <person name="Zhang N."/>
            <person name="Sun Q."/>
            <person name="Li H."/>
            <person name="Li X."/>
            <person name="Cao Y."/>
            <person name="Zhang H."/>
            <person name="Li S."/>
            <person name="Zhang L."/>
            <person name="Qi Y."/>
            <person name="Ren S."/>
            <person name="Zhao B."/>
            <person name="Guo Y.-D."/>
        </authorList>
    </citation>
    <scope>FUNCTION</scope>
    <scope>DISRUPTION PHENOTYPE</scope>
    <source>
        <strain>cv. Columbia</strain>
    </source>
</reference>
<reference key="11">
    <citation type="journal article" date="2016" name="J. Pineal Res.">
        <title>Melatonin biosynthesis in plants: multiple pathways catalyze tryptophan to melatonin in the cytoplasm or chloroplasts.</title>
        <authorList>
            <person name="Back K."/>
            <person name="Tan D.-X."/>
            <person name="Reiter R.J."/>
        </authorList>
    </citation>
    <scope>REVIEW ON MELATONIN BIOSYNTHESIS</scope>
</reference>
<reference key="12">
    <citation type="journal article" date="2016" name="Plant Physiol. Biochem.">
        <title>Melatonin-induced CBF/DREB1s are essential for diurnal change of disease resistance and CCA1 expression in Arabidopsis.</title>
        <authorList>
            <person name="Shi H."/>
            <person name="Wei Y."/>
            <person name="He C."/>
        </authorList>
    </citation>
    <scope>INDUCTION</scope>
</reference>
<reference key="13">
    <citation type="journal article" date="2018" name="J. Pineal Res.">
        <title>Melatonin induction and its role in high light stress tolerance in Arabidopsis thaliana.</title>
        <authorList>
            <person name="Lee H.Y."/>
            <person name="Back K."/>
        </authorList>
    </citation>
    <scope>FUNCTION</scope>
    <scope>DISRUPTION PHENOTYPE</scope>
    <scope>INDUCTION BY HIGH LIGHT</scope>
    <source>
        <strain>cv. Columbia</strain>
    </source>
</reference>
<reference key="14">
    <citation type="journal article" date="2018" name="Plant Cell">
        <title>Chloroplast acetyltransferase NSI is required for state transitions in Arabidopsis thaliana.</title>
        <authorList>
            <person name="Koskela M.M."/>
            <person name="Bruenje A."/>
            <person name="Ivanauskaite A."/>
            <person name="Grabsztunowicz M."/>
            <person name="Lassowskat I."/>
            <person name="Neumann U."/>
            <person name="Dinh T.V."/>
            <person name="Sindlinger J."/>
            <person name="Schwarzer D."/>
            <person name="Wirtz M."/>
            <person name="Tyystjaervi E."/>
            <person name="Finkemeier I."/>
            <person name="Mulo P."/>
        </authorList>
    </citation>
    <scope>FUNCTION</scope>
    <scope>DISRUPTION PHENOTYPE</scope>
    <scope>SUBCELLULAR LOCATION</scope>
    <scope>CATALYTIC ACTIVITY</scope>
    <source>
        <strain>cv. Columbia</strain>
    </source>
</reference>
<reference key="15">
    <citation type="journal article" date="2019" name="Biomolecules">
        <title>Knockout of Arabidopsis serotonin N-acetyltransferase-2 reduces melatonin levels and delays flowering.</title>
        <authorList>
            <person name="Lee H.Y."/>
            <person name="Lee K."/>
            <person name="Back K."/>
        </authorList>
    </citation>
    <scope>TISSUE SPECIFICITY</scope>
    <source>
        <strain>cv. Columbia</strain>
    </source>
</reference>
<reference key="16">
    <citation type="journal article" date="2020" name="J. Pineal Res.">
        <title>Daily rhythms of phytomelatonin signaling modulate diurnal stomatal closure via regulating reactive oxygen species dynamics in Arabidopsis.</title>
        <authorList>
            <person name="Li D."/>
            <person name="Wei J."/>
            <person name="Peng Z."/>
            <person name="Ma W."/>
            <person name="Yang Q."/>
            <person name="Song Z."/>
            <person name="Sun W."/>
            <person name="Yang W."/>
            <person name="Yuan L."/>
            <person name="Xu X."/>
            <person name="Chang W."/>
            <person name="Rengel Z."/>
            <person name="Shen J."/>
            <person name="Reiter R.J."/>
            <person name="Cui X."/>
            <person name="Yu D."/>
            <person name="Chen Q."/>
        </authorList>
    </citation>
    <scope>FUNCTION</scope>
    <scope>DISRUPTION PHENOTYPE</scope>
    <scope>INDUCTION</scope>
    <source>
        <strain>cv. Columbia</strain>
    </source>
</reference>
<reference key="17">
    <citation type="journal article" date="2020" name="Mol. Syst. Biol.">
        <title>Dual lysine and N-terminal acetyltransferases reveal the complexity underpinning protein acetylation.</title>
        <authorList>
            <person name="Bienvenut W.V."/>
            <person name="Bruenje A."/>
            <person name="Boyer J.-B."/>
            <person name="Muehlenbeck J.S."/>
            <person name="Bernal G."/>
            <person name="Lassowskat I."/>
            <person name="Dian C."/>
            <person name="Linster E."/>
            <person name="Dinh T.V."/>
            <person name="Koskela M.M."/>
            <person name="Jung V."/>
            <person name="Seidel J."/>
            <person name="Schyrba L.K."/>
            <person name="Ivanauskaite A."/>
            <person name="Eirich J."/>
            <person name="Hell R."/>
            <person name="Schwarzer D."/>
            <person name="Mulo P."/>
            <person name="Wirtz M."/>
            <person name="Meinnel T."/>
            <person name="Giglione C."/>
            <person name="Finkemeier I."/>
        </authorList>
    </citation>
    <scope>FUNCTION</scope>
    <scope>DISRUPTION PHENOTYPE</scope>
    <scope>SUBCELLULAR LOCATION</scope>
    <scope>TISSUE SPECIFICITY</scope>
    <scope>CATALYTIC ACTIVITY</scope>
    <scope>AUTOACETYLATION</scope>
    <scope>GENE FAMILY</scope>
    <scope>NOMENCLATURE</scope>
    <source>
        <strain>cv. Columbia</strain>
    </source>
</reference>
<reference key="18">
    <citation type="journal article" date="2020" name="Photosyn. Res.">
        <title>The topology of plastid inner envelope potassium cation efflux antiporter KEA1 provides new insights into its regulatory features.</title>
        <authorList>
            <person name="Boelter B."/>
            <person name="Mitterreiter M.J."/>
            <person name="Schwenkert S."/>
            <person name="Finkemeier I."/>
            <person name="Kunz H.-H."/>
        </authorList>
    </citation>
    <scope>FUNCTION</scope>
    <scope>DISRUPTION PHENOTYPE</scope>
    <source>
        <strain>cv. Columbia</strain>
    </source>
</reference>
<reference key="19">
    <citation type="journal article" date="2020" name="Plant Physiol.">
        <title>Melatonin represses oil and anthocyanin accumulation in seeds.</title>
        <authorList>
            <person name="Li D."/>
            <person name="Guo Y."/>
            <person name="Zhang D."/>
            <person name="He S."/>
            <person name="Gong J."/>
            <person name="Ma H."/>
            <person name="Gao X."/>
            <person name="Wang Z."/>
            <person name="Jiang L."/>
            <person name="Dun X."/>
            <person name="Hu S."/>
            <person name="Chen M."/>
        </authorList>
    </citation>
    <scope>FUNCTION</scope>
    <scope>DISRUPTION PHENOTYPE</scope>
    <scope>TISSUE SPECIFICITY</scope>
    <scope>DEVELOPMENTAL STAGE</scope>
    <scope>SUBCELLULAR LOCATION</scope>
    <source>
        <strain>cv. Columbia</strain>
    </source>
</reference>
<reference key="20">
    <citation type="journal article" date="2021" name="Antioxidants">
        <title>Melatonin regulates chloroplast protein quality control via a mitogen-activated protein kinase signaling pathway.</title>
        <authorList>
            <person name="Lee H.Y."/>
            <person name="Back K."/>
        </authorList>
    </citation>
    <scope>FUNCTION</scope>
    <scope>DISRUPTION PHENOTYPE</scope>
    <source>
        <strain>cv. Columbia</strain>
    </source>
</reference>
<reference key="21">
    <citation type="journal article" date="2021" name="Front. Plant Sci.">
        <title>Roles of endogenous melatonin in resistance to Botrytis cinerea infection in an Arabidopsis model.</title>
        <authorList>
            <person name="Zhu Y."/>
            <person name="Guo M.-J."/>
            <person name="Song J.-B."/>
            <person name="Zhang S.-Y."/>
            <person name="Guo R."/>
            <person name="Hou D.-R."/>
            <person name="Hao C.-Y."/>
            <person name="An H.-L."/>
            <person name="Huang X."/>
        </authorList>
    </citation>
    <scope>FUNCTION (MICROBIAL INFECTION)</scope>
    <scope>DISRUPTION PHENOTYPE</scope>
    <source>
        <strain>cv. Columbia</strain>
    </source>
</reference>
<reference key="22">
    <citation type="journal article" date="2021" name="Int. J. Mol. Sci.">
        <title>CAND2/PMTR1 is required for melatonin-conferred osmotic stress tolerance in Arabidopsis.</title>
        <authorList>
            <person name="Wang L.-F."/>
            <person name="Li T.-T."/>
            <person name="Zhang Y."/>
            <person name="Guo J.-X."/>
            <person name="Lu K.-K."/>
            <person name="Liu W.-C."/>
        </authorList>
    </citation>
    <scope>FUNCTION</scope>
    <scope>DISRUPTION PHENOTYPE</scope>
    <scope>INDUCTION BY OSMOTIC STRESS</scope>
    <source>
        <strain>cv. Columbia</strain>
    </source>
</reference>
<reference key="23">
    <citation type="journal article" date="2021" name="J. Pineal Res.">
        <title>Melatonin inhibits seed germination by crosstalk with abscisic acid, gibberellin, and auxin in Arabidopsis.</title>
        <authorList>
            <person name="Lv Y."/>
            <person name="Pan J."/>
            <person name="Wang H."/>
            <person name="Reiter R.J."/>
            <person name="Li X."/>
            <person name="Mou Z."/>
            <person name="Zhang J."/>
            <person name="Yao Z."/>
            <person name="Zhao D."/>
            <person name="Yu D."/>
        </authorList>
    </citation>
    <scope>FUNCTION</scope>
    <scope>DISRUPTION PHENOTYPE</scope>
    <source>
        <strain>cv. Columbia</strain>
        <strain>cv. Landsberg erecta</strain>
        <strain>cv. Wassilewskija</strain>
    </source>
</reference>
<reference key="24">
    <citation type="journal article" date="2022" name="Plant Cell Physiol.">
        <title>Chloroplast Acetyltransferase GNAT2 is Involved in the Organization and Dynamics of Thylakoid Structure.</title>
        <authorList>
            <person name="Rantala M."/>
            <person name="Ivanauskaite A."/>
            <person name="Laihonen L."/>
            <person name="Kanna S.D."/>
            <person name="Ughy B."/>
            <person name="Mulo P."/>
        </authorList>
    </citation>
    <scope>FUNCTION</scope>
    <scope>DISRUPTION PHENOTYPE</scope>
    <source>
        <strain>cv. Columbia</strain>
    </source>
</reference>
<reference key="25">
    <citation type="journal article" date="2022" name="Plant Cell Rep.">
        <title>H2S aids osmotic stress resistance by S-sulfhydration of melatonin production-related enzymes in Arabidopsis thaliana.</title>
        <authorList>
            <person name="Wang Z."/>
            <person name="Mu Y."/>
            <person name="Hao X."/>
            <person name="Yang J."/>
            <person name="Zhang D."/>
            <person name="Jin Z."/>
            <person name="Pei Y."/>
        </authorList>
    </citation>
    <scope>FUNCTION</scope>
    <scope>DISRUPTION PHENOTYPE</scope>
    <scope>SULFHYDRATION BY HYDROGEN SULFIDE</scope>
    <scope>INDUCTION BY OSMOTIC STRESS</scope>
    <source>
        <strain>cv. Columbia</strain>
    </source>
</reference>
<feature type="transit peptide" description="Chloroplast" evidence="2">
    <location>
        <begin position="1"/>
        <end position="58"/>
    </location>
</feature>
<feature type="chain" id="PRO_0000333286" description="GCN5-related N-acetyltransferase 2, chloroplastic">
    <location>
        <begin position="59"/>
        <end position="258"/>
    </location>
</feature>
<feature type="domain" description="N-acetyltransferase" evidence="3">
    <location>
        <begin position="107"/>
        <end position="258"/>
    </location>
</feature>
<feature type="region of interest" description="Interaction with begomoviruses NSP protein">
    <location>
        <begin position="107"/>
        <end position="194"/>
    </location>
</feature>
<feature type="active site" description="Proton donor" evidence="1">
    <location>
        <position position="238"/>
    </location>
</feature>
<feature type="binding site" evidence="1">
    <location>
        <begin position="195"/>
        <end position="197"/>
    </location>
    <ligand>
        <name>acetyl-CoA</name>
        <dbReference type="ChEBI" id="CHEBI:57288"/>
    </ligand>
</feature>
<feature type="binding site" evidence="1">
    <location>
        <begin position="203"/>
        <end position="208"/>
    </location>
    <ligand>
        <name>acetyl-CoA</name>
        <dbReference type="ChEBI" id="CHEBI:57288"/>
    </ligand>
</feature>
<feature type="binding site" evidence="1">
    <location>
        <begin position="231"/>
        <end position="233"/>
    </location>
    <ligand>
        <name>acetyl-CoA</name>
        <dbReference type="ChEBI" id="CHEBI:57288"/>
    </ligand>
</feature>
<feature type="binding site" evidence="1">
    <location>
        <position position="238"/>
    </location>
    <ligand>
        <name>acetyl-CoA</name>
        <dbReference type="ChEBI" id="CHEBI:57288"/>
    </ligand>
</feature>
<feature type="splice variant" id="VSP_033513" description="In isoform 2." evidence="30 31">
    <location>
        <position position="15"/>
    </location>
</feature>
<feature type="splice variant" id="VSP_033514" description="In isoform 3." evidence="23">
    <location>
        <position position="164"/>
    </location>
</feature>
<feature type="mutagenesis site" description="Complete loss of interaction with CaLCuV NSP protein." evidence="6">
    <original>I</original>
    <variation>T</variation>
    <location>
        <position position="107"/>
    </location>
</feature>
<feature type="mutagenesis site" description="Complete loss of interaction with CaLCuV NSP protein." evidence="6">
    <original>K</original>
    <variation>E</variation>
    <location>
        <position position="136"/>
    </location>
</feature>
<feature type="mutagenesis site" description="Complete loss of interaction with CaLCuV NSP protein." evidence="6">
    <original>D</original>
    <variation>G</variation>
    <location>
        <position position="194"/>
    </location>
</feature>
<accession>Q7X9V3</accession>
<accession>A8MRN8</accession>
<accession>Q8LD61</accession>
<accession>Q9C6X3</accession>
<evidence type="ECO:0000250" key="1">
    <source>
        <dbReference type="UniProtKB" id="Q96F10"/>
    </source>
</evidence>
<evidence type="ECO:0000255" key="2"/>
<evidence type="ECO:0000255" key="3">
    <source>
        <dbReference type="PROSITE-ProRule" id="PRU00532"/>
    </source>
</evidence>
<evidence type="ECO:0000269" key="4">
    <source>
    </source>
</evidence>
<evidence type="ECO:0000269" key="5">
    <source>
    </source>
</evidence>
<evidence type="ECO:0000269" key="6">
    <source>
    </source>
</evidence>
<evidence type="ECO:0000269" key="7">
    <source>
    </source>
</evidence>
<evidence type="ECO:0000269" key="8">
    <source>
    </source>
</evidence>
<evidence type="ECO:0000269" key="9">
    <source>
    </source>
</evidence>
<evidence type="ECO:0000269" key="10">
    <source>
    </source>
</evidence>
<evidence type="ECO:0000269" key="11">
    <source>
    </source>
</evidence>
<evidence type="ECO:0000269" key="12">
    <source>
    </source>
</evidence>
<evidence type="ECO:0000269" key="13">
    <source>
    </source>
</evidence>
<evidence type="ECO:0000269" key="14">
    <source>
    </source>
</evidence>
<evidence type="ECO:0000269" key="15">
    <source>
    </source>
</evidence>
<evidence type="ECO:0000269" key="16">
    <source>
    </source>
</evidence>
<evidence type="ECO:0000269" key="17">
    <source>
    </source>
</evidence>
<evidence type="ECO:0000269" key="18">
    <source>
    </source>
</evidence>
<evidence type="ECO:0000269" key="19">
    <source>
    </source>
</evidence>
<evidence type="ECO:0000269" key="20">
    <source>
    </source>
</evidence>
<evidence type="ECO:0000269" key="21">
    <source>
    </source>
</evidence>
<evidence type="ECO:0000303" key="22">
    <source>
    </source>
</evidence>
<evidence type="ECO:0000303" key="23">
    <source>
    </source>
</evidence>
<evidence type="ECO:0000303" key="24">
    <source>
    </source>
</evidence>
<evidence type="ECO:0000303" key="25">
    <source>
    </source>
</evidence>
<evidence type="ECO:0000303" key="26">
    <source>
    </source>
</evidence>
<evidence type="ECO:0000303" key="27">
    <source>
    </source>
</evidence>
<evidence type="ECO:0000303" key="28">
    <source>
    </source>
</evidence>
<evidence type="ECO:0000303" key="29">
    <source>
    </source>
</evidence>
<evidence type="ECO:0000303" key="30">
    <source ref="4"/>
</evidence>
<evidence type="ECO:0000303" key="31">
    <source ref="5"/>
</evidence>
<evidence type="ECO:0000305" key="32"/>
<evidence type="ECO:0000312" key="33">
    <source>
        <dbReference type="Araport" id="AT1G32070"/>
    </source>
</evidence>
<evidence type="ECO:0000312" key="34">
    <source>
        <dbReference type="EMBL" id="AAG50796.1"/>
    </source>
</evidence>
<proteinExistence type="evidence at protein level"/>